<sequence>MAVPKRRTSKTRKNKRRTHFKISVPGMTECPNCGEYKLSHRVCKNCGSYNGEEVAAK</sequence>
<keyword id="KW-0687">Ribonucleoprotein</keyword>
<keyword id="KW-0689">Ribosomal protein</keyword>
<protein>
    <recommendedName>
        <fullName evidence="1">Large ribosomal subunit protein bL32</fullName>
    </recommendedName>
    <alternativeName>
        <fullName evidence="2">50S ribosomal protein L32</fullName>
    </alternativeName>
</protein>
<gene>
    <name evidence="1" type="primary">rpmF</name>
    <name type="ordered locus">SA0975.1</name>
    <name type="ORF">SAS033</name>
</gene>
<evidence type="ECO:0000255" key="1">
    <source>
        <dbReference type="HAMAP-Rule" id="MF_00340"/>
    </source>
</evidence>
<evidence type="ECO:0000305" key="2"/>
<comment type="similarity">
    <text evidence="1">Belongs to the bacterial ribosomal protein bL32 family.</text>
</comment>
<feature type="chain" id="PRO_0000172404" description="Large ribosomal subunit protein bL32">
    <location>
        <begin position="1"/>
        <end position="57"/>
    </location>
</feature>
<reference key="1">
    <citation type="journal article" date="2001" name="Lancet">
        <title>Whole genome sequencing of meticillin-resistant Staphylococcus aureus.</title>
        <authorList>
            <person name="Kuroda M."/>
            <person name="Ohta T."/>
            <person name="Uchiyama I."/>
            <person name="Baba T."/>
            <person name="Yuzawa H."/>
            <person name="Kobayashi I."/>
            <person name="Cui L."/>
            <person name="Oguchi A."/>
            <person name="Aoki K."/>
            <person name="Nagai Y."/>
            <person name="Lian J.-Q."/>
            <person name="Ito T."/>
            <person name="Kanamori M."/>
            <person name="Matsumaru H."/>
            <person name="Maruyama A."/>
            <person name="Murakami H."/>
            <person name="Hosoyama A."/>
            <person name="Mizutani-Ui Y."/>
            <person name="Takahashi N.K."/>
            <person name="Sawano T."/>
            <person name="Inoue R."/>
            <person name="Kaito C."/>
            <person name="Sekimizu K."/>
            <person name="Hirakawa H."/>
            <person name="Kuhara S."/>
            <person name="Goto S."/>
            <person name="Yabuzaki J."/>
            <person name="Kanehisa M."/>
            <person name="Yamashita A."/>
            <person name="Oshima K."/>
            <person name="Furuya K."/>
            <person name="Yoshino C."/>
            <person name="Shiba T."/>
            <person name="Hattori M."/>
            <person name="Ogasawara N."/>
            <person name="Hayashi H."/>
            <person name="Hiramatsu K."/>
        </authorList>
    </citation>
    <scope>NUCLEOTIDE SEQUENCE [LARGE SCALE GENOMIC DNA]</scope>
    <source>
        <strain>N315</strain>
    </source>
</reference>
<reference key="2">
    <citation type="submission" date="2007-10" db="UniProtKB">
        <title>Shotgun proteomic analysis of total and membrane protein extracts of S. aureus strain N315.</title>
        <authorList>
            <person name="Vaezzadeh A.R."/>
            <person name="Deshusses J."/>
            <person name="Lescuyer P."/>
            <person name="Hochstrasser D.F."/>
        </authorList>
    </citation>
    <scope>IDENTIFICATION BY MASS SPECTROMETRY [LARGE SCALE ANALYSIS]</scope>
    <source>
        <strain>N315</strain>
    </source>
</reference>
<dbReference type="EMBL" id="BA000018">
    <property type="protein sequence ID" value="BAB42224.1"/>
    <property type="molecule type" value="Genomic_DNA"/>
</dbReference>
<dbReference type="PIR" id="D89883">
    <property type="entry name" value="D89883"/>
</dbReference>
<dbReference type="RefSeq" id="WP_000290472.1">
    <property type="nucleotide sequence ID" value="NC_002745.2"/>
</dbReference>
<dbReference type="SMR" id="P66210"/>
<dbReference type="EnsemblBacteria" id="BAB42224">
    <property type="protein sequence ID" value="BAB42224"/>
    <property type="gene ID" value="BAB42224"/>
</dbReference>
<dbReference type="GeneID" id="98345444"/>
<dbReference type="KEGG" id="sau:SAS033"/>
<dbReference type="HOGENOM" id="CLU_129084_1_3_9"/>
<dbReference type="GO" id="GO:0015934">
    <property type="term" value="C:large ribosomal subunit"/>
    <property type="evidence" value="ECO:0007669"/>
    <property type="project" value="InterPro"/>
</dbReference>
<dbReference type="GO" id="GO:0003735">
    <property type="term" value="F:structural constituent of ribosome"/>
    <property type="evidence" value="ECO:0007669"/>
    <property type="project" value="InterPro"/>
</dbReference>
<dbReference type="GO" id="GO:0006412">
    <property type="term" value="P:translation"/>
    <property type="evidence" value="ECO:0007669"/>
    <property type="project" value="UniProtKB-UniRule"/>
</dbReference>
<dbReference type="Gene3D" id="1.20.5.640">
    <property type="entry name" value="Single helix bin"/>
    <property type="match status" value="1"/>
</dbReference>
<dbReference type="HAMAP" id="MF_00340">
    <property type="entry name" value="Ribosomal_bL32"/>
    <property type="match status" value="1"/>
</dbReference>
<dbReference type="InterPro" id="IPR002677">
    <property type="entry name" value="Ribosomal_bL32"/>
</dbReference>
<dbReference type="InterPro" id="IPR044957">
    <property type="entry name" value="Ribosomal_bL32_bact"/>
</dbReference>
<dbReference type="InterPro" id="IPR011332">
    <property type="entry name" value="Ribosomal_zn-bd"/>
</dbReference>
<dbReference type="NCBIfam" id="TIGR01031">
    <property type="entry name" value="rpmF_bact"/>
    <property type="match status" value="1"/>
</dbReference>
<dbReference type="PANTHER" id="PTHR35534">
    <property type="entry name" value="50S RIBOSOMAL PROTEIN L32"/>
    <property type="match status" value="1"/>
</dbReference>
<dbReference type="PANTHER" id="PTHR35534:SF2">
    <property type="entry name" value="LARGE RIBOSOMAL SUBUNIT PROTEIN BL32"/>
    <property type="match status" value="1"/>
</dbReference>
<dbReference type="Pfam" id="PF01783">
    <property type="entry name" value="Ribosomal_L32p"/>
    <property type="match status" value="1"/>
</dbReference>
<dbReference type="SUPFAM" id="SSF57829">
    <property type="entry name" value="Zn-binding ribosomal proteins"/>
    <property type="match status" value="1"/>
</dbReference>
<proteinExistence type="evidence at protein level"/>
<organism>
    <name type="scientific">Staphylococcus aureus (strain N315)</name>
    <dbReference type="NCBI Taxonomy" id="158879"/>
    <lineage>
        <taxon>Bacteria</taxon>
        <taxon>Bacillati</taxon>
        <taxon>Bacillota</taxon>
        <taxon>Bacilli</taxon>
        <taxon>Bacillales</taxon>
        <taxon>Staphylococcaceae</taxon>
        <taxon>Staphylococcus</taxon>
    </lineage>
</organism>
<name>RL32_STAAN</name>
<accession>P66210</accession>
<accession>Q99UX6</accession>